<proteinExistence type="evidence at transcript level"/>
<organism>
    <name type="scientific">Rattus norvegicus</name>
    <name type="common">Rat</name>
    <dbReference type="NCBI Taxonomy" id="10116"/>
    <lineage>
        <taxon>Eukaryota</taxon>
        <taxon>Metazoa</taxon>
        <taxon>Chordata</taxon>
        <taxon>Craniata</taxon>
        <taxon>Vertebrata</taxon>
        <taxon>Euteleostomi</taxon>
        <taxon>Mammalia</taxon>
        <taxon>Eutheria</taxon>
        <taxon>Euarchontoglires</taxon>
        <taxon>Glires</taxon>
        <taxon>Rodentia</taxon>
        <taxon>Myomorpha</taxon>
        <taxon>Muroidea</taxon>
        <taxon>Muridae</taxon>
        <taxon>Murinae</taxon>
        <taxon>Rattus</taxon>
    </lineage>
</organism>
<protein>
    <recommendedName>
        <fullName>Vomeronasal type-1 receptor 95</fullName>
    </recommendedName>
    <alternativeName>
        <fullName>Vomeronasal type-1 receptor 52</fullName>
    </alternativeName>
    <alternativeName>
        <fullName>Vomeronasal type-1 receptor A7</fullName>
    </alternativeName>
</protein>
<reference evidence="5" key="1">
    <citation type="submission" date="2003-12" db="EMBL/GenBank/DDBJ databases">
        <title>Rat vomeronasal receptors.</title>
        <authorList>
            <person name="Capello L."/>
            <person name="Rodriguez I."/>
        </authorList>
    </citation>
    <scope>NUCLEOTIDE SEQUENCE [MRNA]</scope>
</reference>
<evidence type="ECO:0000250" key="1"/>
<evidence type="ECO:0000250" key="2">
    <source>
        <dbReference type="UniProtKB" id="Q8VIC6"/>
    </source>
</evidence>
<evidence type="ECO:0000255" key="3"/>
<evidence type="ECO:0000305" key="4"/>
<evidence type="ECO:0000312" key="5">
    <source>
        <dbReference type="EMBL" id="AAR88008.1"/>
    </source>
</evidence>
<comment type="function">
    <text evidence="2">Putative pheromone receptor implicated in the regulation of social as well as reproductive behavior.</text>
</comment>
<comment type="subcellular location">
    <subcellularLocation>
        <location evidence="4">Cell membrane</location>
        <topology evidence="3">Multi-pass membrane protein</topology>
    </subcellularLocation>
</comment>
<comment type="similarity">
    <text evidence="3">Belongs to the G-protein coupled receptor 1 family.</text>
</comment>
<gene>
    <name type="primary">Vom1r95</name>
    <name type="synonym">V1ra7</name>
    <name type="synonym">Vmn1r52</name>
</gene>
<sequence length="314" mass="35674">MNKDNTLYCSAYRIAFFSEIGIGISANSCLLLFHTFMFIRGHRPRLTDLPIGLVALIHLVMLLLAAYITEDFFMSSGGWDDITCKLFIFLHRFFRSLSVCDTCMLSVFQAIILCPQSSHLAKFKLNSPHHLSCFFIFMSIFYTSISSHILIAAIATQNLTSVNLIYITKSCSFLPMSSSMQRTFSTLLAFRNVFLIGLMGLSTCYMATLLCRHKTRSQQLQNSKLSPKATPEQRAIWTILMLMSFFLIISTFDSIMTYSRTIFQGNQSLYCVQIPVAHGYAAFSPLLVLNNEKRLTSLMISMYDRIVRLESLCS</sequence>
<accession>Q5J3G9</accession>
<dbReference type="EMBL" id="AY510341">
    <property type="protein sequence ID" value="AAR88008.1"/>
    <property type="molecule type" value="mRNA"/>
</dbReference>
<dbReference type="RefSeq" id="NP_001406647.1">
    <property type="nucleotide sequence ID" value="NM_001419718.1"/>
</dbReference>
<dbReference type="SMR" id="Q5J3G9"/>
<dbReference type="GlyCosmos" id="Q5J3G9">
    <property type="glycosylation" value="2 sites, No reported glycans"/>
</dbReference>
<dbReference type="GlyGen" id="Q5J3G9">
    <property type="glycosylation" value="2 sites"/>
</dbReference>
<dbReference type="PaxDb" id="10116-ENSRNOP00000064703"/>
<dbReference type="GeneID" id="494295"/>
<dbReference type="UCSC" id="RGD:1359401">
    <property type="organism name" value="rat"/>
</dbReference>
<dbReference type="AGR" id="RGD:1359401"/>
<dbReference type="RGD" id="1359401">
    <property type="gene designation" value="Vom1r95"/>
</dbReference>
<dbReference type="eggNOG" id="ENOG502SNRJ">
    <property type="taxonomic scope" value="Eukaryota"/>
</dbReference>
<dbReference type="HOGENOM" id="CLU_058641_0_0_1"/>
<dbReference type="InParanoid" id="Q5J3G9"/>
<dbReference type="PhylomeDB" id="Q5J3G9"/>
<dbReference type="PRO" id="PR:Q5J3G9"/>
<dbReference type="Proteomes" id="UP000002494">
    <property type="component" value="Chromosome 4"/>
</dbReference>
<dbReference type="Bgee" id="ENSRNOG00000048956">
    <property type="expression patterns" value="Expressed in testis"/>
</dbReference>
<dbReference type="GO" id="GO:0005886">
    <property type="term" value="C:plasma membrane"/>
    <property type="evidence" value="ECO:0007669"/>
    <property type="project" value="UniProtKB-SubCell"/>
</dbReference>
<dbReference type="GO" id="GO:0016503">
    <property type="term" value="F:pheromone receptor activity"/>
    <property type="evidence" value="ECO:0007669"/>
    <property type="project" value="InterPro"/>
</dbReference>
<dbReference type="GO" id="GO:0019236">
    <property type="term" value="P:response to pheromone"/>
    <property type="evidence" value="ECO:0007669"/>
    <property type="project" value="UniProtKB-KW"/>
</dbReference>
<dbReference type="CDD" id="cd13949">
    <property type="entry name" value="7tm_V1R_pheromone"/>
    <property type="match status" value="1"/>
</dbReference>
<dbReference type="FunFam" id="1.20.1070.10:FF:000051">
    <property type="entry name" value="Vomeronasal type-1 receptor"/>
    <property type="match status" value="1"/>
</dbReference>
<dbReference type="Gene3D" id="1.20.1070.10">
    <property type="entry name" value="Rhodopsin 7-helix transmembrane proteins"/>
    <property type="match status" value="1"/>
</dbReference>
<dbReference type="InterPro" id="IPR004072">
    <property type="entry name" value="Vmron_rcpt_1"/>
</dbReference>
<dbReference type="PANTHER" id="PTHR24062">
    <property type="entry name" value="VOMERONASAL TYPE-1 RECEPTOR"/>
    <property type="match status" value="1"/>
</dbReference>
<dbReference type="Pfam" id="PF03402">
    <property type="entry name" value="V1R"/>
    <property type="match status" value="1"/>
</dbReference>
<dbReference type="PRINTS" id="PR01534">
    <property type="entry name" value="VOMERONASL1R"/>
</dbReference>
<dbReference type="SUPFAM" id="SSF81321">
    <property type="entry name" value="Family A G protein-coupled receptor-like"/>
    <property type="match status" value="1"/>
</dbReference>
<keyword id="KW-1003">Cell membrane</keyword>
<keyword id="KW-1015">Disulfide bond</keyword>
<keyword id="KW-0297">G-protein coupled receptor</keyword>
<keyword id="KW-0325">Glycoprotein</keyword>
<keyword id="KW-0472">Membrane</keyword>
<keyword id="KW-0589">Pheromone response</keyword>
<keyword id="KW-0675">Receptor</keyword>
<keyword id="KW-1185">Reference proteome</keyword>
<keyword id="KW-0807">Transducer</keyword>
<keyword id="KW-0812">Transmembrane</keyword>
<keyword id="KW-1133">Transmembrane helix</keyword>
<feature type="chain" id="PRO_0000239963" description="Vomeronasal type-1 receptor 95">
    <location>
        <begin position="1"/>
        <end position="314"/>
    </location>
</feature>
<feature type="topological domain" description="Extracellular" evidence="3">
    <location>
        <begin position="1"/>
        <end position="18"/>
    </location>
</feature>
<feature type="transmembrane region" description="Helical; Name=1" evidence="3">
    <location>
        <begin position="19"/>
        <end position="39"/>
    </location>
</feature>
<feature type="topological domain" description="Cytoplasmic" evidence="3">
    <location>
        <begin position="40"/>
        <end position="48"/>
    </location>
</feature>
<feature type="transmembrane region" description="Helical; Name=2" evidence="3">
    <location>
        <begin position="49"/>
        <end position="69"/>
    </location>
</feature>
<feature type="topological domain" description="Extracellular" evidence="3">
    <location>
        <begin position="70"/>
        <end position="88"/>
    </location>
</feature>
<feature type="transmembrane region" description="Helical; Name=3" evidence="3">
    <location>
        <begin position="89"/>
        <end position="113"/>
    </location>
</feature>
<feature type="topological domain" description="Cytoplasmic" evidence="3">
    <location>
        <begin position="114"/>
        <end position="133"/>
    </location>
</feature>
<feature type="transmembrane region" description="Helical; Name=4" evidence="3">
    <location>
        <begin position="134"/>
        <end position="154"/>
    </location>
</feature>
<feature type="topological domain" description="Extracellular" evidence="3">
    <location>
        <begin position="155"/>
        <end position="186"/>
    </location>
</feature>
<feature type="transmembrane region" description="Helical; Name=5" evidence="3">
    <location>
        <begin position="187"/>
        <end position="207"/>
    </location>
</feature>
<feature type="topological domain" description="Cytoplasmic" evidence="3">
    <location>
        <begin position="208"/>
        <end position="235"/>
    </location>
</feature>
<feature type="transmembrane region" description="Helical; Name=6" evidence="3">
    <location>
        <begin position="236"/>
        <end position="256"/>
    </location>
</feature>
<feature type="topological domain" description="Extracellular" evidence="3">
    <location>
        <begin position="257"/>
        <end position="268"/>
    </location>
</feature>
<feature type="transmembrane region" description="Helical; Name=7" evidence="3">
    <location>
        <begin position="269"/>
        <end position="289"/>
    </location>
</feature>
<feature type="topological domain" description="Cytoplasmic" evidence="3">
    <location>
        <begin position="290"/>
        <end position="314"/>
    </location>
</feature>
<feature type="glycosylation site" description="N-linked (GlcNAc...) asparagine" evidence="3">
    <location>
        <position position="158"/>
    </location>
</feature>
<feature type="glycosylation site" description="N-linked (GlcNAc...) asparagine" evidence="3">
    <location>
        <position position="266"/>
    </location>
</feature>
<feature type="disulfide bond" evidence="1">
    <location>
        <begin position="84"/>
        <end position="171"/>
    </location>
</feature>
<name>V1R95_RAT</name>